<proteinExistence type="evidence at transcript level"/>
<reference key="1">
    <citation type="journal article" date="2005" name="Genome Biol.">
        <title>Full-length cDNAs from chicken bursal lymphocytes to facilitate gene function analysis.</title>
        <authorList>
            <person name="Caldwell R.B."/>
            <person name="Kierzek A.M."/>
            <person name="Arakawa H."/>
            <person name="Bezzubov Y."/>
            <person name="Zaim J."/>
            <person name="Fiedler P."/>
            <person name="Kutter S."/>
            <person name="Blagodatski A."/>
            <person name="Kostovska D."/>
            <person name="Koter M."/>
            <person name="Plachy J."/>
            <person name="Carninci P."/>
            <person name="Hayashizaki Y."/>
            <person name="Buerstedde J.-M."/>
        </authorList>
    </citation>
    <scope>NUCLEOTIDE SEQUENCE [LARGE SCALE MRNA]</scope>
    <source>
        <strain>CB</strain>
        <tissue>Bursa of Fabricius</tissue>
    </source>
</reference>
<comment type="function">
    <text evidence="1">Involved in pre-mRNA splicing and processing events.</text>
</comment>
<comment type="subcellular location">
    <subcellularLocation>
        <location evidence="2">Nucleus</location>
    </subcellularLocation>
</comment>
<comment type="similarity">
    <text evidence="4">Belongs to the splicing factor SR family.</text>
</comment>
<keyword id="KW-0507">mRNA processing</keyword>
<keyword id="KW-0508">mRNA splicing</keyword>
<keyword id="KW-0539">Nucleus</keyword>
<keyword id="KW-1185">Reference proteome</keyword>
<accession>Q5ZMJ9</accession>
<protein>
    <recommendedName>
        <fullName>Serine/arginine repetitive matrix protein 1</fullName>
    </recommendedName>
</protein>
<sequence length="888" mass="100804">MDAGFFRGTSAEQDNRFSNKQKKLLKQLKFAECLEKKVDMSKVNLEVIKPWITKRVTEILGFEDDVVIEFIFNQLEVKNPDSKMMQINLTGFLNGKNAREFMGELWPLLLSAQENIAGIPTAFLELKKEEIKQRQIEQEKLASMKKQDEDKEKRDKEDKDNREKRDRSRSPRRRKSRSPSPRRRSSPIRRERKRSHSRSPHHRTKSRSATPAPEKKEATPEPEPSVKPKETVVQEATSNSDIPKAPKSEPPVPETKEISPERNSKKEREKEKEKTRQRSPTRSKSRSRSRSRSPSHSRPRRRHRSRSRRRPSPRRRPSPRRRTPPRRMPPPPRHRRSRSPVRRRRRSSASLSGSSSSSSSSRSRSPPKKPPKRTVSSPPRKTRRLSPSASPPRRRHRPSPPASPPPKPRRSPTPQQSNRARKSRGSVSPGRASAPKHKSTEKRESPSPAPKPRKAELSESEEDKGGKMAAADSVQQRRQYRRQNQQSSSDSGSSSSSEEERPKRSNVKNGEVGRRRRHSHSRSPSPSPRKRQKEPSPRRRRRSPSPPPARRRRSPSPPPPPRRRRSPSLPRRRSPSPPPRRRSPSPRRYSPPIQRRYSPSPPPKRRTASPPPPPKRRASPSPQSKRRVSHSPPPKQRSSPAAKRRSPSISSKHRKGSPPSRSNRETRSPPQNKRDSPSPRPRASHTSSSPPPLRRGASASPQRRQSPSPSTRPIRRVSRTPEPKKTKASTPSPRSARRVSSSRSASGSPEPAPKKHQGPPSPARSRSPSANWSPAKKAKSPTQSPSPARNSDQEGGGKKKKKKKDKKHKKDKKHKKHKKHKKEKAAVAAAPAAVAAADTTSAQEEQEAETEPKKETESEPEDNLDDLEKHLREKALRSMRKAQVSPPS</sequence>
<name>SRRM1_CHICK</name>
<gene>
    <name type="primary">SRRM1</name>
    <name type="ORF">RCJMB04_1m21</name>
</gene>
<evidence type="ECO:0000250" key="1"/>
<evidence type="ECO:0000255" key="2">
    <source>
        <dbReference type="PROSITE-ProRule" id="PRU00627"/>
    </source>
</evidence>
<evidence type="ECO:0000256" key="3">
    <source>
        <dbReference type="SAM" id="MobiDB-lite"/>
    </source>
</evidence>
<evidence type="ECO:0000305" key="4"/>
<organism>
    <name type="scientific">Gallus gallus</name>
    <name type="common">Chicken</name>
    <dbReference type="NCBI Taxonomy" id="9031"/>
    <lineage>
        <taxon>Eukaryota</taxon>
        <taxon>Metazoa</taxon>
        <taxon>Chordata</taxon>
        <taxon>Craniata</taxon>
        <taxon>Vertebrata</taxon>
        <taxon>Euteleostomi</taxon>
        <taxon>Archelosauria</taxon>
        <taxon>Archosauria</taxon>
        <taxon>Dinosauria</taxon>
        <taxon>Saurischia</taxon>
        <taxon>Theropoda</taxon>
        <taxon>Coelurosauria</taxon>
        <taxon>Aves</taxon>
        <taxon>Neognathae</taxon>
        <taxon>Galloanserae</taxon>
        <taxon>Galliformes</taxon>
        <taxon>Phasianidae</taxon>
        <taxon>Phasianinae</taxon>
        <taxon>Gallus</taxon>
    </lineage>
</organism>
<feature type="chain" id="PRO_0000076329" description="Serine/arginine repetitive matrix protein 1">
    <location>
        <begin position="1"/>
        <end position="888"/>
    </location>
</feature>
<feature type="domain" description="PWI" evidence="2">
    <location>
        <begin position="27"/>
        <end position="126"/>
    </location>
</feature>
<feature type="region of interest" description="Disordered" evidence="3">
    <location>
        <begin position="139"/>
        <end position="888"/>
    </location>
</feature>
<feature type="compositionally biased region" description="Basic and acidic residues" evidence="3">
    <location>
        <begin position="139"/>
        <end position="169"/>
    </location>
</feature>
<feature type="compositionally biased region" description="Basic residues" evidence="3">
    <location>
        <begin position="170"/>
        <end position="206"/>
    </location>
</feature>
<feature type="compositionally biased region" description="Basic and acidic residues" evidence="3">
    <location>
        <begin position="213"/>
        <end position="232"/>
    </location>
</feature>
<feature type="compositionally biased region" description="Basic and acidic residues" evidence="3">
    <location>
        <begin position="254"/>
        <end position="276"/>
    </location>
</feature>
<feature type="compositionally biased region" description="Basic residues" evidence="3">
    <location>
        <begin position="277"/>
        <end position="325"/>
    </location>
</feature>
<feature type="compositionally biased region" description="Basic residues" evidence="3">
    <location>
        <begin position="332"/>
        <end position="347"/>
    </location>
</feature>
<feature type="compositionally biased region" description="Low complexity" evidence="3">
    <location>
        <begin position="348"/>
        <end position="364"/>
    </location>
</feature>
<feature type="compositionally biased region" description="Low complexity" evidence="3">
    <location>
        <begin position="473"/>
        <end position="496"/>
    </location>
</feature>
<feature type="compositionally biased region" description="Basic residues" evidence="3">
    <location>
        <begin position="528"/>
        <end position="554"/>
    </location>
</feature>
<feature type="compositionally biased region" description="Basic residues" evidence="3">
    <location>
        <begin position="561"/>
        <end position="585"/>
    </location>
</feature>
<feature type="compositionally biased region" description="Low complexity" evidence="3">
    <location>
        <begin position="586"/>
        <end position="598"/>
    </location>
</feature>
<feature type="compositionally biased region" description="Basic residues" evidence="3">
    <location>
        <begin position="614"/>
        <end position="629"/>
    </location>
</feature>
<feature type="compositionally biased region" description="Basic residues" evidence="3">
    <location>
        <begin position="642"/>
        <end position="656"/>
    </location>
</feature>
<feature type="compositionally biased region" description="Basic and acidic residues" evidence="3">
    <location>
        <begin position="662"/>
        <end position="677"/>
    </location>
</feature>
<feature type="compositionally biased region" description="Low complexity" evidence="3">
    <location>
        <begin position="697"/>
        <end position="712"/>
    </location>
</feature>
<feature type="compositionally biased region" description="Low complexity" evidence="3">
    <location>
        <begin position="728"/>
        <end position="749"/>
    </location>
</feature>
<feature type="compositionally biased region" description="Low complexity" evidence="3">
    <location>
        <begin position="763"/>
        <end position="775"/>
    </location>
</feature>
<feature type="compositionally biased region" description="Polar residues" evidence="3">
    <location>
        <begin position="780"/>
        <end position="790"/>
    </location>
</feature>
<feature type="compositionally biased region" description="Basic residues" evidence="3">
    <location>
        <begin position="798"/>
        <end position="823"/>
    </location>
</feature>
<feature type="compositionally biased region" description="Low complexity" evidence="3">
    <location>
        <begin position="826"/>
        <end position="843"/>
    </location>
</feature>
<feature type="compositionally biased region" description="Basic and acidic residues" evidence="3">
    <location>
        <begin position="866"/>
        <end position="876"/>
    </location>
</feature>
<dbReference type="EMBL" id="AJ719385">
    <property type="protein sequence ID" value="CAG31044.1"/>
    <property type="molecule type" value="mRNA"/>
</dbReference>
<dbReference type="RefSeq" id="NP_001026665.1">
    <property type="nucleotide sequence ID" value="NM_001031494.1"/>
</dbReference>
<dbReference type="BMRB" id="Q5ZMJ9"/>
<dbReference type="SMR" id="Q5ZMJ9"/>
<dbReference type="FunCoup" id="Q5ZMJ9">
    <property type="interactions" value="1433"/>
</dbReference>
<dbReference type="STRING" id="9031.ENSGALP00000055309"/>
<dbReference type="GlyGen" id="Q5ZMJ9">
    <property type="glycosylation" value="1 site"/>
</dbReference>
<dbReference type="PaxDb" id="9031-ENSGALP00000001957"/>
<dbReference type="GeneID" id="428216"/>
<dbReference type="KEGG" id="gga:428216"/>
<dbReference type="CTD" id="10250"/>
<dbReference type="VEuPathDB" id="HostDB:geneid_428216"/>
<dbReference type="eggNOG" id="KOG2146">
    <property type="taxonomic scope" value="Eukaryota"/>
</dbReference>
<dbReference type="InParanoid" id="Q5ZMJ9"/>
<dbReference type="OrthoDB" id="163257at2759"/>
<dbReference type="PhylomeDB" id="Q5ZMJ9"/>
<dbReference type="PRO" id="PR:Q5ZMJ9"/>
<dbReference type="Proteomes" id="UP000000539">
    <property type="component" value="Unassembled WGS sequence"/>
</dbReference>
<dbReference type="GO" id="GO:0005681">
    <property type="term" value="C:spliceosomal complex"/>
    <property type="evidence" value="ECO:0000318"/>
    <property type="project" value="GO_Central"/>
</dbReference>
<dbReference type="GO" id="GO:0003723">
    <property type="term" value="F:RNA binding"/>
    <property type="evidence" value="ECO:0000318"/>
    <property type="project" value="GO_Central"/>
</dbReference>
<dbReference type="GO" id="GO:0006397">
    <property type="term" value="P:mRNA processing"/>
    <property type="evidence" value="ECO:0007669"/>
    <property type="project" value="UniProtKB-KW"/>
</dbReference>
<dbReference type="GO" id="GO:0048024">
    <property type="term" value="P:regulation of mRNA splicing, via spliceosome"/>
    <property type="evidence" value="ECO:0000318"/>
    <property type="project" value="GO_Central"/>
</dbReference>
<dbReference type="GO" id="GO:0008380">
    <property type="term" value="P:RNA splicing"/>
    <property type="evidence" value="ECO:0007669"/>
    <property type="project" value="UniProtKB-KW"/>
</dbReference>
<dbReference type="FunFam" id="1.20.1390.10:FF:000002">
    <property type="entry name" value="Serine/arginine repetitive matrix 1 isoform 2"/>
    <property type="match status" value="1"/>
</dbReference>
<dbReference type="Gene3D" id="1.20.1390.10">
    <property type="entry name" value="PWI domain"/>
    <property type="match status" value="1"/>
</dbReference>
<dbReference type="InterPro" id="IPR002483">
    <property type="entry name" value="PWI_dom"/>
</dbReference>
<dbReference type="InterPro" id="IPR036483">
    <property type="entry name" value="PWI_dom_sf"/>
</dbReference>
<dbReference type="InterPro" id="IPR052225">
    <property type="entry name" value="Ser/Arg_repetitive_matrix"/>
</dbReference>
<dbReference type="PANTHER" id="PTHR23148">
    <property type="entry name" value="SERINE/ARGININE REGULATED NUCLEAR MATRIX PROTEIN"/>
    <property type="match status" value="1"/>
</dbReference>
<dbReference type="PANTHER" id="PTHR23148:SF0">
    <property type="entry name" value="SERINE_ARGININE REPETITIVE MATRIX PROTEIN 1"/>
    <property type="match status" value="1"/>
</dbReference>
<dbReference type="Pfam" id="PF01480">
    <property type="entry name" value="PWI"/>
    <property type="match status" value="1"/>
</dbReference>
<dbReference type="SMART" id="SM00311">
    <property type="entry name" value="PWI"/>
    <property type="match status" value="1"/>
</dbReference>
<dbReference type="SUPFAM" id="SSF101233">
    <property type="entry name" value="PWI domain"/>
    <property type="match status" value="1"/>
</dbReference>
<dbReference type="PROSITE" id="PS51025">
    <property type="entry name" value="PWI"/>
    <property type="match status" value="1"/>
</dbReference>